<name>NFUA_SHIBS</name>
<organism>
    <name type="scientific">Shigella boydii serotype 4 (strain Sb227)</name>
    <dbReference type="NCBI Taxonomy" id="300268"/>
    <lineage>
        <taxon>Bacteria</taxon>
        <taxon>Pseudomonadati</taxon>
        <taxon>Pseudomonadota</taxon>
        <taxon>Gammaproteobacteria</taxon>
        <taxon>Enterobacterales</taxon>
        <taxon>Enterobacteriaceae</taxon>
        <taxon>Shigella</taxon>
    </lineage>
</organism>
<gene>
    <name evidence="1" type="primary">nfuA</name>
    <name type="synonym">yhgI</name>
    <name type="ordered locus">SBO_3403</name>
</gene>
<reference key="1">
    <citation type="journal article" date="2005" name="Nucleic Acids Res.">
        <title>Genome dynamics and diversity of Shigella species, the etiologic agents of bacillary dysentery.</title>
        <authorList>
            <person name="Yang F."/>
            <person name="Yang J."/>
            <person name="Zhang X."/>
            <person name="Chen L."/>
            <person name="Jiang Y."/>
            <person name="Yan Y."/>
            <person name="Tang X."/>
            <person name="Wang J."/>
            <person name="Xiong Z."/>
            <person name="Dong J."/>
            <person name="Xue Y."/>
            <person name="Zhu Y."/>
            <person name="Xu X."/>
            <person name="Sun L."/>
            <person name="Chen S."/>
            <person name="Nie H."/>
            <person name="Peng J."/>
            <person name="Xu J."/>
            <person name="Wang Y."/>
            <person name="Yuan Z."/>
            <person name="Wen Y."/>
            <person name="Yao Z."/>
            <person name="Shen Y."/>
            <person name="Qiang B."/>
            <person name="Hou Y."/>
            <person name="Yu J."/>
            <person name="Jin Q."/>
        </authorList>
    </citation>
    <scope>NUCLEOTIDE SEQUENCE [LARGE SCALE GENOMIC DNA]</scope>
    <source>
        <strain>Sb227</strain>
    </source>
</reference>
<sequence>MIRISDAAQAHFAKLLANQEEGTQIRVFVINPGTPNAECGVSYCPPDAVEATDTALKFDLLTAYVDELSAPYLEDAEIDFVTDQLGSQLTLKAPNAKMRKVADDAPLMERVEYMLQSQINPQLAGHGGRVSLMEITEDGYAILQFGGGCNGCSMVDVTLKEGIEKQLLNEFPELKGVRDLTEHQRGEHSYY</sequence>
<feature type="chain" id="PRO_0000268243" description="Fe/S biogenesis protein NfuA">
    <location>
        <begin position="1"/>
        <end position="191"/>
    </location>
</feature>
<feature type="binding site" evidence="1">
    <location>
        <position position="149"/>
    </location>
    <ligand>
        <name>[4Fe-4S] cluster</name>
        <dbReference type="ChEBI" id="CHEBI:49883"/>
    </ligand>
</feature>
<feature type="binding site" evidence="1">
    <location>
        <position position="152"/>
    </location>
    <ligand>
        <name>[4Fe-4S] cluster</name>
        <dbReference type="ChEBI" id="CHEBI:49883"/>
    </ligand>
</feature>
<proteinExistence type="inferred from homology"/>
<accession>Q31VL8</accession>
<comment type="function">
    <text evidence="1">Involved in iron-sulfur cluster biogenesis. Binds a 4Fe-4S cluster, can transfer this cluster to apoproteins, and thereby intervenes in the maturation of Fe/S proteins. Could also act as a scaffold/chaperone for damaged Fe/S proteins.</text>
</comment>
<comment type="cofactor">
    <cofactor evidence="1">
        <name>[4Fe-4S] cluster</name>
        <dbReference type="ChEBI" id="CHEBI:49883"/>
    </cofactor>
    <text evidence="1">Binds 1 [4Fe-4S] cluster per subunit. The cluster is presumably bound at the interface of two monomers.</text>
</comment>
<comment type="subunit">
    <text evidence="1">Homodimer.</text>
</comment>
<comment type="similarity">
    <text evidence="1">Belongs to the NfuA family.</text>
</comment>
<keyword id="KW-0004">4Fe-4S</keyword>
<keyword id="KW-0408">Iron</keyword>
<keyword id="KW-0411">Iron-sulfur</keyword>
<keyword id="KW-0479">Metal-binding</keyword>
<dbReference type="EMBL" id="CP000036">
    <property type="protein sequence ID" value="ABB67890.1"/>
    <property type="molecule type" value="Genomic_DNA"/>
</dbReference>
<dbReference type="RefSeq" id="WP_000619389.1">
    <property type="nucleotide sequence ID" value="NC_007613.1"/>
</dbReference>
<dbReference type="SMR" id="Q31VL8"/>
<dbReference type="GeneID" id="93778582"/>
<dbReference type="KEGG" id="sbo:SBO_3403"/>
<dbReference type="HOGENOM" id="CLU_094569_0_0_6"/>
<dbReference type="Proteomes" id="UP000007067">
    <property type="component" value="Chromosome"/>
</dbReference>
<dbReference type="GO" id="GO:0051539">
    <property type="term" value="F:4 iron, 4 sulfur cluster binding"/>
    <property type="evidence" value="ECO:0007669"/>
    <property type="project" value="UniProtKB-UniRule"/>
</dbReference>
<dbReference type="GO" id="GO:0005506">
    <property type="term" value="F:iron ion binding"/>
    <property type="evidence" value="ECO:0007669"/>
    <property type="project" value="InterPro"/>
</dbReference>
<dbReference type="GO" id="GO:0016226">
    <property type="term" value="P:iron-sulfur cluster assembly"/>
    <property type="evidence" value="ECO:0007669"/>
    <property type="project" value="UniProtKB-UniRule"/>
</dbReference>
<dbReference type="GO" id="GO:0051604">
    <property type="term" value="P:protein maturation"/>
    <property type="evidence" value="ECO:0007669"/>
    <property type="project" value="UniProtKB-UniRule"/>
</dbReference>
<dbReference type="FunFam" id="2.60.300.12:FF:000004">
    <property type="entry name" value="Fe/S biogenesis protein NfuA"/>
    <property type="match status" value="1"/>
</dbReference>
<dbReference type="FunFam" id="3.30.300.130:FF:000002">
    <property type="entry name" value="Fe/S biogenesis protein NfuA"/>
    <property type="match status" value="1"/>
</dbReference>
<dbReference type="Gene3D" id="3.30.300.130">
    <property type="entry name" value="Fe-S cluster assembly (FSCA)"/>
    <property type="match status" value="1"/>
</dbReference>
<dbReference type="Gene3D" id="2.60.300.12">
    <property type="entry name" value="HesB-like domain"/>
    <property type="match status" value="1"/>
</dbReference>
<dbReference type="HAMAP" id="MF_01637">
    <property type="entry name" value="Fe_S_biogen_NfuA"/>
    <property type="match status" value="1"/>
</dbReference>
<dbReference type="InterPro" id="IPR017726">
    <property type="entry name" value="Fe/S_biogenesis_protein_NfuA"/>
</dbReference>
<dbReference type="InterPro" id="IPR000361">
    <property type="entry name" value="FeS_biogenesis"/>
</dbReference>
<dbReference type="InterPro" id="IPR034904">
    <property type="entry name" value="FSCA_dom_sf"/>
</dbReference>
<dbReference type="InterPro" id="IPR035903">
    <property type="entry name" value="HesB-like_dom_sf"/>
</dbReference>
<dbReference type="InterPro" id="IPR001075">
    <property type="entry name" value="NIF_FeS_clus_asmbl_NifU_C"/>
</dbReference>
<dbReference type="NCBIfam" id="NF008392">
    <property type="entry name" value="PRK11190.1"/>
    <property type="match status" value="1"/>
</dbReference>
<dbReference type="NCBIfam" id="TIGR03341">
    <property type="entry name" value="YhgI_GntY"/>
    <property type="match status" value="1"/>
</dbReference>
<dbReference type="PANTHER" id="PTHR11178:SF51">
    <property type="entry name" value="FE_S BIOGENESIS PROTEIN NFUA"/>
    <property type="match status" value="1"/>
</dbReference>
<dbReference type="PANTHER" id="PTHR11178">
    <property type="entry name" value="IRON-SULFUR CLUSTER SCAFFOLD PROTEIN NFU-RELATED"/>
    <property type="match status" value="1"/>
</dbReference>
<dbReference type="Pfam" id="PF01521">
    <property type="entry name" value="Fe-S_biosyn"/>
    <property type="match status" value="1"/>
</dbReference>
<dbReference type="Pfam" id="PF01106">
    <property type="entry name" value="NifU"/>
    <property type="match status" value="1"/>
</dbReference>
<dbReference type="SUPFAM" id="SSF117916">
    <property type="entry name" value="Fe-S cluster assembly (FSCA) domain-like"/>
    <property type="match status" value="1"/>
</dbReference>
<dbReference type="SUPFAM" id="SSF89360">
    <property type="entry name" value="HesB-like domain"/>
    <property type="match status" value="1"/>
</dbReference>
<evidence type="ECO:0000255" key="1">
    <source>
        <dbReference type="HAMAP-Rule" id="MF_01637"/>
    </source>
</evidence>
<protein>
    <recommendedName>
        <fullName evidence="1">Fe/S biogenesis protein NfuA</fullName>
    </recommendedName>
</protein>